<organism>
    <name type="scientific">Nitratidesulfovibrio vulgaris (strain ATCC 29579 / DSM 644 / CCUG 34227 / NCIMB 8303 / VKM B-1760 / Hildenborough)</name>
    <name type="common">Desulfovibrio vulgaris</name>
    <dbReference type="NCBI Taxonomy" id="882"/>
    <lineage>
        <taxon>Bacteria</taxon>
        <taxon>Pseudomonadati</taxon>
        <taxon>Thermodesulfobacteriota</taxon>
        <taxon>Desulfovibrionia</taxon>
        <taxon>Desulfovibrionales</taxon>
        <taxon>Desulfovibrionaceae</taxon>
        <taxon>Nitratidesulfovibrio</taxon>
    </lineage>
</organism>
<keyword id="KW-0274">FAD</keyword>
<keyword id="KW-0285">Flavoprotein</keyword>
<keyword id="KW-0489">Methyltransferase</keyword>
<keyword id="KW-0521">NADP</keyword>
<keyword id="KW-0545">Nucleotide biosynthesis</keyword>
<keyword id="KW-1185">Reference proteome</keyword>
<keyword id="KW-0808">Transferase</keyword>
<protein>
    <recommendedName>
        <fullName evidence="1">Flavin-dependent thymidylate synthase</fullName>
        <shortName evidence="1">FDTS</shortName>
        <ecNumber evidence="1">2.1.1.148</ecNumber>
    </recommendedName>
    <alternativeName>
        <fullName evidence="1">FAD-dependent thymidylate synthase</fullName>
    </alternativeName>
    <alternativeName>
        <fullName evidence="1">Thymidylate synthase ThyX</fullName>
        <shortName evidence="1">TS</shortName>
        <shortName evidence="1">TSase</shortName>
    </alternativeName>
</protein>
<gene>
    <name evidence="1" type="primary">thyX</name>
    <name type="ordered locus">DVU_2254</name>
</gene>
<name>THYX_NITV2</name>
<evidence type="ECO:0000255" key="1">
    <source>
        <dbReference type="HAMAP-Rule" id="MF_01408"/>
    </source>
</evidence>
<evidence type="ECO:0000255" key="2">
    <source>
        <dbReference type="PROSITE-ProRule" id="PRU00661"/>
    </source>
</evidence>
<dbReference type="EC" id="2.1.1.148" evidence="1"/>
<dbReference type="EMBL" id="AE017285">
    <property type="protein sequence ID" value="AAS96727.1"/>
    <property type="molecule type" value="Genomic_DNA"/>
</dbReference>
<dbReference type="RefSeq" id="WP_010939529.1">
    <property type="nucleotide sequence ID" value="NC_002937.3"/>
</dbReference>
<dbReference type="RefSeq" id="YP_011467.1">
    <property type="nucleotide sequence ID" value="NC_002937.3"/>
</dbReference>
<dbReference type="SMR" id="Q729U4"/>
<dbReference type="STRING" id="882.DVU_2254"/>
<dbReference type="PaxDb" id="882-DVU_2254"/>
<dbReference type="EnsemblBacteria" id="AAS96727">
    <property type="protein sequence ID" value="AAS96727"/>
    <property type="gene ID" value="DVU_2254"/>
</dbReference>
<dbReference type="KEGG" id="dvu:DVU_2254"/>
<dbReference type="PATRIC" id="fig|882.5.peg.2048"/>
<dbReference type="eggNOG" id="COG1351">
    <property type="taxonomic scope" value="Bacteria"/>
</dbReference>
<dbReference type="HOGENOM" id="CLU_077585_0_0_7"/>
<dbReference type="OrthoDB" id="9780625at2"/>
<dbReference type="PhylomeDB" id="Q729U4"/>
<dbReference type="UniPathway" id="UPA00575"/>
<dbReference type="Proteomes" id="UP000002194">
    <property type="component" value="Chromosome"/>
</dbReference>
<dbReference type="GO" id="GO:0050660">
    <property type="term" value="F:flavin adenine dinucleotide binding"/>
    <property type="evidence" value="ECO:0007669"/>
    <property type="project" value="InterPro"/>
</dbReference>
<dbReference type="GO" id="GO:0070402">
    <property type="term" value="F:NADPH binding"/>
    <property type="evidence" value="ECO:0007669"/>
    <property type="project" value="TreeGrafter"/>
</dbReference>
<dbReference type="GO" id="GO:0050797">
    <property type="term" value="F:thymidylate synthase (FAD) activity"/>
    <property type="evidence" value="ECO:0007669"/>
    <property type="project" value="UniProtKB-UniRule"/>
</dbReference>
<dbReference type="GO" id="GO:0004799">
    <property type="term" value="F:thymidylate synthase activity"/>
    <property type="evidence" value="ECO:0007669"/>
    <property type="project" value="TreeGrafter"/>
</dbReference>
<dbReference type="GO" id="GO:0006231">
    <property type="term" value="P:dTMP biosynthetic process"/>
    <property type="evidence" value="ECO:0007669"/>
    <property type="project" value="UniProtKB-UniRule"/>
</dbReference>
<dbReference type="GO" id="GO:0006235">
    <property type="term" value="P:dTTP biosynthetic process"/>
    <property type="evidence" value="ECO:0007669"/>
    <property type="project" value="UniProtKB-UniRule"/>
</dbReference>
<dbReference type="GO" id="GO:0032259">
    <property type="term" value="P:methylation"/>
    <property type="evidence" value="ECO:0007669"/>
    <property type="project" value="UniProtKB-KW"/>
</dbReference>
<dbReference type="CDD" id="cd20175">
    <property type="entry name" value="ThyX"/>
    <property type="match status" value="1"/>
</dbReference>
<dbReference type="Gene3D" id="3.30.1360.170">
    <property type="match status" value="1"/>
</dbReference>
<dbReference type="HAMAP" id="MF_01408">
    <property type="entry name" value="ThyX"/>
    <property type="match status" value="1"/>
</dbReference>
<dbReference type="InterPro" id="IPR003669">
    <property type="entry name" value="Thymidylate_synthase_ThyX"/>
</dbReference>
<dbReference type="InterPro" id="IPR036098">
    <property type="entry name" value="Thymidylate_synthase_ThyX_sf"/>
</dbReference>
<dbReference type="NCBIfam" id="TIGR02170">
    <property type="entry name" value="thyX"/>
    <property type="match status" value="1"/>
</dbReference>
<dbReference type="PANTHER" id="PTHR34934">
    <property type="entry name" value="FLAVIN-DEPENDENT THYMIDYLATE SYNTHASE"/>
    <property type="match status" value="1"/>
</dbReference>
<dbReference type="PANTHER" id="PTHR34934:SF1">
    <property type="entry name" value="FLAVIN-DEPENDENT THYMIDYLATE SYNTHASE"/>
    <property type="match status" value="1"/>
</dbReference>
<dbReference type="Pfam" id="PF02511">
    <property type="entry name" value="Thy1"/>
    <property type="match status" value="1"/>
</dbReference>
<dbReference type="SUPFAM" id="SSF69796">
    <property type="entry name" value="Thymidylate synthase-complementing protein Thy1"/>
    <property type="match status" value="1"/>
</dbReference>
<dbReference type="PROSITE" id="PS51331">
    <property type="entry name" value="THYX"/>
    <property type="match status" value="1"/>
</dbReference>
<comment type="function">
    <text evidence="1">Catalyzes the reductive methylation of 2'-deoxyuridine-5'-monophosphate (dUMP) to 2'-deoxythymidine-5'-monophosphate (dTMP) while utilizing 5,10-methylenetetrahydrofolate (mTHF) as the methyl donor, and NADPH and FADH(2) as the reductant.</text>
</comment>
<comment type="catalytic activity">
    <reaction evidence="1">
        <text>dUMP + (6R)-5,10-methylene-5,6,7,8-tetrahydrofolate + NADPH + H(+) = dTMP + (6S)-5,6,7,8-tetrahydrofolate + NADP(+)</text>
        <dbReference type="Rhea" id="RHEA:29043"/>
        <dbReference type="ChEBI" id="CHEBI:15378"/>
        <dbReference type="ChEBI" id="CHEBI:15636"/>
        <dbReference type="ChEBI" id="CHEBI:57453"/>
        <dbReference type="ChEBI" id="CHEBI:57783"/>
        <dbReference type="ChEBI" id="CHEBI:58349"/>
        <dbReference type="ChEBI" id="CHEBI:63528"/>
        <dbReference type="ChEBI" id="CHEBI:246422"/>
        <dbReference type="EC" id="2.1.1.148"/>
    </reaction>
</comment>
<comment type="cofactor">
    <cofactor evidence="1">
        <name>FAD</name>
        <dbReference type="ChEBI" id="CHEBI:57692"/>
    </cofactor>
    <text evidence="1">Binds 4 FAD per tetramer. Each FAD binding site is formed by three monomers.</text>
</comment>
<comment type="pathway">
    <text evidence="1">Pyrimidine metabolism; dTTP biosynthesis.</text>
</comment>
<comment type="subunit">
    <text evidence="1">Homotetramer.</text>
</comment>
<comment type="similarity">
    <text evidence="1">Belongs to the thymidylate synthase ThyX family.</text>
</comment>
<accession>Q729U4</accession>
<feature type="chain" id="PRO_0000175561" description="Flavin-dependent thymidylate synthase">
    <location>
        <begin position="1"/>
        <end position="245"/>
    </location>
</feature>
<feature type="domain" description="ThyX" evidence="2">
    <location>
        <begin position="6"/>
        <end position="220"/>
    </location>
</feature>
<feature type="short sequence motif" description="ThyX motif" evidence="1">
    <location>
        <begin position="89"/>
        <end position="99"/>
    </location>
</feature>
<feature type="active site" description="Involved in ionization of N3 of dUMP, leading to its activation" evidence="1">
    <location>
        <position position="186"/>
    </location>
</feature>
<feature type="binding site" evidence="1">
    <location>
        <position position="65"/>
    </location>
    <ligand>
        <name>FAD</name>
        <dbReference type="ChEBI" id="CHEBI:57692"/>
        <note>ligand shared between neighboring subunits</note>
    </ligand>
</feature>
<feature type="binding site" evidence="1">
    <location>
        <begin position="86"/>
        <end position="89"/>
    </location>
    <ligand>
        <name>dUMP</name>
        <dbReference type="ChEBI" id="CHEBI:246422"/>
        <note>ligand shared between dimeric partners</note>
    </ligand>
</feature>
<feature type="binding site" evidence="1">
    <location>
        <begin position="89"/>
        <end position="91"/>
    </location>
    <ligand>
        <name>FAD</name>
        <dbReference type="ChEBI" id="CHEBI:57692"/>
        <note>ligand shared between neighboring subunits</note>
    </ligand>
</feature>
<feature type="binding site" description="in other chain" evidence="1">
    <location>
        <begin position="97"/>
        <end position="101"/>
    </location>
    <ligand>
        <name>dUMP</name>
        <dbReference type="ChEBI" id="CHEBI:246422"/>
        <note>ligand shared between dimeric partners</note>
    </ligand>
</feature>
<feature type="binding site" evidence="1">
    <location>
        <position position="97"/>
    </location>
    <ligand>
        <name>FAD</name>
        <dbReference type="ChEBI" id="CHEBI:57692"/>
        <note>ligand shared between neighboring subunits</note>
    </ligand>
</feature>
<feature type="binding site" description="in other chain" evidence="1">
    <location>
        <position position="159"/>
    </location>
    <ligand>
        <name>dUMP</name>
        <dbReference type="ChEBI" id="CHEBI:246422"/>
        <note>ligand shared between dimeric partners</note>
    </ligand>
</feature>
<feature type="binding site" evidence="1">
    <location>
        <begin position="175"/>
        <end position="177"/>
    </location>
    <ligand>
        <name>FAD</name>
        <dbReference type="ChEBI" id="CHEBI:57692"/>
        <note>ligand shared between neighboring subunits</note>
    </ligand>
</feature>
<feature type="binding site" evidence="1">
    <location>
        <position position="181"/>
    </location>
    <ligand>
        <name>FAD</name>
        <dbReference type="ChEBI" id="CHEBI:57692"/>
        <note>ligand shared between neighboring subunits</note>
    </ligand>
</feature>
<feature type="binding site" evidence="1">
    <location>
        <position position="186"/>
    </location>
    <ligand>
        <name>dUMP</name>
        <dbReference type="ChEBI" id="CHEBI:246422"/>
        <note>ligand shared between dimeric partners</note>
    </ligand>
</feature>
<proteinExistence type="inferred from homology"/>
<reference key="1">
    <citation type="journal article" date="2004" name="Nat. Biotechnol.">
        <title>The genome sequence of the anaerobic, sulfate-reducing bacterium Desulfovibrio vulgaris Hildenborough.</title>
        <authorList>
            <person name="Heidelberg J.F."/>
            <person name="Seshadri R."/>
            <person name="Haveman S.A."/>
            <person name="Hemme C.L."/>
            <person name="Paulsen I.T."/>
            <person name="Kolonay J.F."/>
            <person name="Eisen J.A."/>
            <person name="Ward N.L."/>
            <person name="Methe B.A."/>
            <person name="Brinkac L.M."/>
            <person name="Daugherty S.C."/>
            <person name="DeBoy R.T."/>
            <person name="Dodson R.J."/>
            <person name="Durkin A.S."/>
            <person name="Madupu R."/>
            <person name="Nelson W.C."/>
            <person name="Sullivan S.A."/>
            <person name="Fouts D.E."/>
            <person name="Haft D.H."/>
            <person name="Selengut J."/>
            <person name="Peterson J.D."/>
            <person name="Davidsen T.M."/>
            <person name="Zafar N."/>
            <person name="Zhou L."/>
            <person name="Radune D."/>
            <person name="Dimitrov G."/>
            <person name="Hance M."/>
            <person name="Tran K."/>
            <person name="Khouri H.M."/>
            <person name="Gill J."/>
            <person name="Utterback T.R."/>
            <person name="Feldblyum T.V."/>
            <person name="Wall J.D."/>
            <person name="Voordouw G."/>
            <person name="Fraser C.M."/>
        </authorList>
    </citation>
    <scope>NUCLEOTIDE SEQUENCE [LARGE SCALE GENOMIC DNA]</scope>
    <source>
        <strain>ATCC 29579 / DSM 644 / CCUG 34227 / NCIMB 8303 / VKM B-1760 / Hildenborough</strain>
    </source>
</reference>
<sequence length="245" mass="27652">MPRTEPRVELLAHTPEPLSLLYAAFRQCYHAGFVADMWPRLLSGEIEREKQGAFIASILESGHSSPIEHVSFTFAIEGVSRALTHQLVRHRIASFSQQSQRYVDGSHFDYVMPPAIARNAAAKARFEQFMEDVGSAYRDIKALLEQDGRTGSRANEDARFVLPQAAASKIVVTMNCRALVHFFEERCCMRAQWEIRAVADVMLGLCREVLPELFAHAGAKCERLGYCPEGERFTCGRYPLRQSMP</sequence>